<gene>
    <name evidence="4" type="ordered locus">VP1905</name>
</gene>
<comment type="function">
    <text evidence="2">Involved in the uptake of the osmoprotectant glycine betaine.</text>
</comment>
<comment type="subcellular location">
    <subcellularLocation>
        <location evidence="3">Cell inner membrane</location>
        <topology evidence="1">Multi-pass membrane protein</topology>
    </subcellularLocation>
</comment>
<comment type="induction">
    <text evidence="2">Induced by NaCl upshock.</text>
</comment>
<comment type="similarity">
    <text evidence="3">Belongs to the BCCT transporter (TC 2.A.15) family.</text>
</comment>
<keyword id="KW-0029">Amino-acid transport</keyword>
<keyword id="KW-0997">Cell inner membrane</keyword>
<keyword id="KW-1003">Cell membrane</keyword>
<keyword id="KW-0472">Membrane</keyword>
<keyword id="KW-0346">Stress response</keyword>
<keyword id="KW-0812">Transmembrane</keyword>
<keyword id="KW-1133">Transmembrane helix</keyword>
<keyword id="KW-0813">Transport</keyword>
<organism>
    <name type="scientific">Vibrio parahaemolyticus serotype O3:K6 (strain RIMD 2210633)</name>
    <dbReference type="NCBI Taxonomy" id="223926"/>
    <lineage>
        <taxon>Bacteria</taxon>
        <taxon>Pseudomonadati</taxon>
        <taxon>Pseudomonadota</taxon>
        <taxon>Gammaproteobacteria</taxon>
        <taxon>Vibrionales</taxon>
        <taxon>Vibrionaceae</taxon>
        <taxon>Vibrio</taxon>
    </lineage>
</organism>
<feature type="chain" id="PRO_0000441717" description="Glycine betaine transporter 1">
    <location>
        <begin position="1"/>
        <end position="523"/>
    </location>
</feature>
<feature type="transmembrane region" description="Helical" evidence="1">
    <location>
        <begin position="33"/>
        <end position="53"/>
    </location>
</feature>
<feature type="transmembrane region" description="Helical" evidence="1">
    <location>
        <begin position="71"/>
        <end position="91"/>
    </location>
</feature>
<feature type="transmembrane region" description="Helical" evidence="1">
    <location>
        <begin position="109"/>
        <end position="129"/>
    </location>
</feature>
<feature type="transmembrane region" description="Helical" evidence="1">
    <location>
        <begin position="165"/>
        <end position="185"/>
    </location>
</feature>
<feature type="transmembrane region" description="Helical" evidence="1">
    <location>
        <begin position="214"/>
        <end position="234"/>
    </location>
</feature>
<feature type="transmembrane region" description="Helical" evidence="1">
    <location>
        <begin position="251"/>
        <end position="271"/>
    </location>
</feature>
<feature type="transmembrane region" description="Helical" evidence="1">
    <location>
        <begin position="286"/>
        <end position="306"/>
    </location>
</feature>
<feature type="transmembrane region" description="Helical" evidence="1">
    <location>
        <begin position="337"/>
        <end position="357"/>
    </location>
</feature>
<feature type="transmembrane region" description="Helical" evidence="1">
    <location>
        <begin position="372"/>
        <end position="392"/>
    </location>
</feature>
<feature type="transmembrane region" description="Helical" evidence="1">
    <location>
        <begin position="420"/>
        <end position="440"/>
    </location>
</feature>
<feature type="transmembrane region" description="Helical" evidence="1">
    <location>
        <begin position="467"/>
        <end position="487"/>
    </location>
</feature>
<feature type="transmembrane region" description="Helical" evidence="1">
    <location>
        <begin position="496"/>
        <end position="516"/>
    </location>
</feature>
<dbReference type="EMBL" id="BA000031">
    <property type="protein sequence ID" value="BAC60168.1"/>
    <property type="molecule type" value="Genomic_DNA"/>
</dbReference>
<dbReference type="RefSeq" id="NP_798284.1">
    <property type="nucleotide sequence ID" value="NC_004603.1"/>
</dbReference>
<dbReference type="RefSeq" id="WP_005458059.1">
    <property type="nucleotide sequence ID" value="NC_004603.1"/>
</dbReference>
<dbReference type="SMR" id="Q87NG3"/>
<dbReference type="GeneID" id="1189412"/>
<dbReference type="KEGG" id="vpa:VP1905"/>
<dbReference type="PATRIC" id="fig|223926.6.peg.1820"/>
<dbReference type="eggNOG" id="COG1292">
    <property type="taxonomic scope" value="Bacteria"/>
</dbReference>
<dbReference type="HOGENOM" id="CLU_010118_5_2_6"/>
<dbReference type="Proteomes" id="UP000002493">
    <property type="component" value="Chromosome 1"/>
</dbReference>
<dbReference type="GO" id="GO:0005886">
    <property type="term" value="C:plasma membrane"/>
    <property type="evidence" value="ECO:0007669"/>
    <property type="project" value="UniProtKB-SubCell"/>
</dbReference>
<dbReference type="GO" id="GO:0022857">
    <property type="term" value="F:transmembrane transporter activity"/>
    <property type="evidence" value="ECO:0007669"/>
    <property type="project" value="InterPro"/>
</dbReference>
<dbReference type="GO" id="GO:0006865">
    <property type="term" value="P:amino acid transport"/>
    <property type="evidence" value="ECO:0007669"/>
    <property type="project" value="UniProtKB-KW"/>
</dbReference>
<dbReference type="InterPro" id="IPR018093">
    <property type="entry name" value="BCCT_CS"/>
</dbReference>
<dbReference type="InterPro" id="IPR000060">
    <property type="entry name" value="BCCT_transptr"/>
</dbReference>
<dbReference type="NCBIfam" id="TIGR00842">
    <property type="entry name" value="bcct"/>
    <property type="match status" value="1"/>
</dbReference>
<dbReference type="PANTHER" id="PTHR30047:SF7">
    <property type="entry name" value="HIGH-AFFINITY CHOLINE TRANSPORT PROTEIN"/>
    <property type="match status" value="1"/>
</dbReference>
<dbReference type="PANTHER" id="PTHR30047">
    <property type="entry name" value="HIGH-AFFINITY CHOLINE TRANSPORT PROTEIN-RELATED"/>
    <property type="match status" value="1"/>
</dbReference>
<dbReference type="Pfam" id="PF02028">
    <property type="entry name" value="BCCT"/>
    <property type="match status" value="1"/>
</dbReference>
<dbReference type="PROSITE" id="PS01303">
    <property type="entry name" value="BCCT"/>
    <property type="match status" value="1"/>
</dbReference>
<accession>Q87NG3</accession>
<proteinExistence type="evidence at protein level"/>
<sequence>MTKGIDKYSIDSTDYTVGQDNVQKWGFDVHNPVFGISAGFIALFLVAALVLDAHTAKTALDGLKWKIIGSFDWLFIIAGNIFVIFCLALIVSPLGKIRLGGKDAVADYSFMSWLAMLFAAGMGIGLMFWSVAEPVAYFTGWYETPLGVEANSPEAARLALGATMFHWGLHPWAIYGVVALSLAFFTYNKGLPLSMRSIFYPLLGDRAWGWAGHIVDILAVLATLFGLATSLGLGAQQAASGIHHVFGVEPGLGLQIVVITVVTLLAVVSVVRGIDGGVKVISNINMVVAFLLLILVGLIGWAASLGSIPTTLMAYVENIIPLSNPFGRTDEAWFQGWTVFYWAWWISWSPFVGMFIARVSRGRTVREFITAVLIVPTVVTVVWMSVFGGLAIDQVVNKVGELGANGLTDVSLAMFQMFDVLPFGNILSIIAVVLVLVFFITSSDSGSLVIDSITAGGKVDAPVLQRVFWAFMEGAIAVALLWIGGSEAVQALQAGAISTALPFTFILLAMCVSLLMGMKTERQ</sequence>
<name>BCCT3_VIBPA</name>
<protein>
    <recommendedName>
        <fullName evidence="3">Glycine betaine transporter 1</fullName>
    </recommendedName>
</protein>
<evidence type="ECO:0000255" key="1"/>
<evidence type="ECO:0000269" key="2">
    <source>
    </source>
</evidence>
<evidence type="ECO:0000305" key="3"/>
<evidence type="ECO:0000312" key="4">
    <source>
        <dbReference type="EMBL" id="BAC60168.1"/>
    </source>
</evidence>
<reference key="1">
    <citation type="journal article" date="2003" name="Lancet">
        <title>Genome sequence of Vibrio parahaemolyticus: a pathogenic mechanism distinct from that of V. cholerae.</title>
        <authorList>
            <person name="Makino K."/>
            <person name="Oshima K."/>
            <person name="Kurokawa K."/>
            <person name="Yokoyama K."/>
            <person name="Uda T."/>
            <person name="Tagomori K."/>
            <person name="Iijima Y."/>
            <person name="Najima M."/>
            <person name="Nakano M."/>
            <person name="Yamashita A."/>
            <person name="Kubota Y."/>
            <person name="Kimura S."/>
            <person name="Yasunaga T."/>
            <person name="Honda T."/>
            <person name="Shinagawa H."/>
            <person name="Hattori M."/>
            <person name="Iida T."/>
        </authorList>
    </citation>
    <scope>NUCLEOTIDE SEQUENCE [LARGE SCALE GENOMIC DNA]</scope>
    <source>
        <strain>RIMD 2210633</strain>
    </source>
</reference>
<reference key="2">
    <citation type="journal article" date="2015" name="Appl. Environ. Microbiol.">
        <title>Deciphering the role of multiple betaine-carnitine-choline transporters in the halophile Vibrio parahaemolyticus.</title>
        <authorList>
            <person name="Ongagna-Yhombi S.Y."/>
            <person name="McDonald N.D."/>
            <person name="Boyd E.F."/>
        </authorList>
    </citation>
    <scope>FUNCTION AS A TRANSPORTER</scope>
    <scope>INDUCTION</scope>
    <source>
        <strain>RIMD 2210633</strain>
    </source>
</reference>